<protein>
    <recommendedName>
        <fullName>UBA-like domain-containing protein 2-B</fullName>
    </recommendedName>
</protein>
<keyword id="KW-1185">Reference proteome</keyword>
<gene>
    <name type="primary">ubald2-b</name>
    <name type="synonym">fam100b-b</name>
</gene>
<comment type="similarity">
    <text evidence="2">Belongs to the UBALD family.</text>
</comment>
<proteinExistence type="evidence at transcript level"/>
<accession>Q6DD24</accession>
<name>UBD2B_XENLA</name>
<reference key="1">
    <citation type="submission" date="2004-07" db="EMBL/GenBank/DDBJ databases">
        <authorList>
            <consortium name="NIH - Xenopus Gene Collection (XGC) project"/>
        </authorList>
    </citation>
    <scope>NUCLEOTIDE SEQUENCE [LARGE SCALE MRNA]</scope>
    <source>
        <tissue>Embryo</tissue>
    </source>
</reference>
<sequence length="165" mass="18026">MSVNMEELRHQVMINQFVLAAGCAADQAKQLLQAAHWQFETALSAFFQESNVASAQHHQHMMCTPSNTPATPPNFPDALAMFSKLRTSESLQNSSSPASNACSPPGNFNPYWASSPPNQQPVWLPPASPTAHLHHHHHHPQPVWPPNSQPTGGPQKAMAAMDGQR</sequence>
<evidence type="ECO:0000256" key="1">
    <source>
        <dbReference type="SAM" id="MobiDB-lite"/>
    </source>
</evidence>
<evidence type="ECO:0000305" key="2"/>
<feature type="chain" id="PRO_0000239032" description="UBA-like domain-containing protein 2-B">
    <location>
        <begin position="1"/>
        <end position="165"/>
    </location>
</feature>
<feature type="region of interest" description="Disordered" evidence="1">
    <location>
        <begin position="119"/>
        <end position="165"/>
    </location>
</feature>
<organism>
    <name type="scientific">Xenopus laevis</name>
    <name type="common">African clawed frog</name>
    <dbReference type="NCBI Taxonomy" id="8355"/>
    <lineage>
        <taxon>Eukaryota</taxon>
        <taxon>Metazoa</taxon>
        <taxon>Chordata</taxon>
        <taxon>Craniata</taxon>
        <taxon>Vertebrata</taxon>
        <taxon>Euteleostomi</taxon>
        <taxon>Amphibia</taxon>
        <taxon>Batrachia</taxon>
        <taxon>Anura</taxon>
        <taxon>Pipoidea</taxon>
        <taxon>Pipidae</taxon>
        <taxon>Xenopodinae</taxon>
        <taxon>Xenopus</taxon>
        <taxon>Xenopus</taxon>
    </lineage>
</organism>
<dbReference type="EMBL" id="BC077805">
    <property type="protein sequence ID" value="AAH77805.1"/>
    <property type="molecule type" value="mRNA"/>
</dbReference>
<dbReference type="RefSeq" id="NP_001086944.1">
    <property type="nucleotide sequence ID" value="NM_001093475.1"/>
</dbReference>
<dbReference type="SMR" id="Q6DD24"/>
<dbReference type="DNASU" id="446779"/>
<dbReference type="GeneID" id="446779"/>
<dbReference type="KEGG" id="xla:446779"/>
<dbReference type="AGR" id="Xenbase:XB-GENE-17331160"/>
<dbReference type="CTD" id="446779"/>
<dbReference type="Xenbase" id="XB-GENE-17331160">
    <property type="gene designation" value="ubald2.S"/>
</dbReference>
<dbReference type="OrthoDB" id="6093553at2759"/>
<dbReference type="Proteomes" id="UP000186698">
    <property type="component" value="Chromosome 9_10S"/>
</dbReference>
<dbReference type="Bgee" id="446779">
    <property type="expression patterns" value="Expressed in internal ear and 19 other cell types or tissues"/>
</dbReference>
<dbReference type="CDD" id="cd14343">
    <property type="entry name" value="UBA_F100B_like"/>
    <property type="match status" value="1"/>
</dbReference>
<dbReference type="Gene3D" id="1.10.8.10">
    <property type="entry name" value="DNA helicase RuvA subunit, C-terminal domain"/>
    <property type="match status" value="1"/>
</dbReference>
<dbReference type="InterPro" id="IPR009060">
    <property type="entry name" value="UBA-like_sf"/>
</dbReference>
<dbReference type="InterPro" id="IPR054109">
    <property type="entry name" value="UBA_8"/>
</dbReference>
<dbReference type="InterPro" id="IPR039310">
    <property type="entry name" value="UBALD1/2"/>
</dbReference>
<dbReference type="PANTHER" id="PTHR31993">
    <property type="entry name" value="UBA-LIKE DOMAIN-CONTAINING PROTEIN 2"/>
    <property type="match status" value="1"/>
</dbReference>
<dbReference type="PANTHER" id="PTHR31993:SF6">
    <property type="entry name" value="UBA-LIKE DOMAIN-CONTAINING PROTEIN 2"/>
    <property type="match status" value="1"/>
</dbReference>
<dbReference type="Pfam" id="PF22566">
    <property type="entry name" value="UBA_8"/>
    <property type="match status" value="1"/>
</dbReference>
<dbReference type="SUPFAM" id="SSF46934">
    <property type="entry name" value="UBA-like"/>
    <property type="match status" value="1"/>
</dbReference>